<accession>C4KKV8</accession>
<reference key="1">
    <citation type="journal article" date="2009" name="Proc. Natl. Acad. Sci. U.S.A.">
        <title>Biogeography of the Sulfolobus islandicus pan-genome.</title>
        <authorList>
            <person name="Reno M.L."/>
            <person name="Held N.L."/>
            <person name="Fields C.J."/>
            <person name="Burke P.V."/>
            <person name="Whitaker R.J."/>
        </authorList>
    </citation>
    <scope>NUCLEOTIDE SEQUENCE [LARGE SCALE GENOMIC DNA]</scope>
    <source>
        <strain>M.16.4 / Kamchatka #3</strain>
    </source>
</reference>
<keyword id="KW-0963">Cytoplasm</keyword>
<keyword id="KW-0227">DNA damage</keyword>
<keyword id="KW-0234">DNA repair</keyword>
<keyword id="KW-0489">Methyltransferase</keyword>
<keyword id="KW-0808">Transferase</keyword>
<sequence length="151" mass="17037">MLVYGLYKSPLGYITVAKDDKGFIMLDFCDCVEGNSRDDSSFTEFFHKLDLYFEGKPINLREPINLKTYPFRLSVFKEVMKIPWGKVMTYKQIADSLGTSPRAVGMALSKNPILLIIPCHRVIAENGIGGYSRGVKLKRALLELEGVKIPE</sequence>
<organism>
    <name type="scientific">Saccharolobus islandicus (strain M.16.4 / Kamchatka #3)</name>
    <name type="common">Sulfolobus islandicus</name>
    <dbReference type="NCBI Taxonomy" id="426118"/>
    <lineage>
        <taxon>Archaea</taxon>
        <taxon>Thermoproteota</taxon>
        <taxon>Thermoprotei</taxon>
        <taxon>Sulfolobales</taxon>
        <taxon>Sulfolobaceae</taxon>
        <taxon>Saccharolobus</taxon>
    </lineage>
</organism>
<evidence type="ECO:0000255" key="1">
    <source>
        <dbReference type="HAMAP-Rule" id="MF_00772"/>
    </source>
</evidence>
<proteinExistence type="inferred from homology"/>
<feature type="chain" id="PRO_1000212902" description="Methylated-DNA--protein-cysteine methyltransferase">
    <location>
        <begin position="1"/>
        <end position="151"/>
    </location>
</feature>
<feature type="active site" description="Nucleophile; methyl group acceptor" evidence="1">
    <location>
        <position position="119"/>
    </location>
</feature>
<protein>
    <recommendedName>
        <fullName evidence="1">Methylated-DNA--protein-cysteine methyltransferase</fullName>
        <ecNumber evidence="1">2.1.1.63</ecNumber>
    </recommendedName>
    <alternativeName>
        <fullName evidence="1">6-O-methylguanine-DNA methyltransferase</fullName>
        <shortName evidence="1">MGMT</shortName>
    </alternativeName>
    <alternativeName>
        <fullName evidence="1">O-6-methylguanine-DNA-alkyltransferase</fullName>
    </alternativeName>
</protein>
<gene>
    <name evidence="1" type="primary">ogt</name>
    <name type="ordered locus">M164_0289</name>
</gene>
<comment type="function">
    <text evidence="1">Involved in the cellular defense against the biological effects of O6-methylguanine (O6-MeG) and O4-methylthymine (O4-MeT) in DNA. Repairs the methylated nucleobase in DNA by stoichiometrically transferring the methyl group to a cysteine residue in the enzyme. This is a suicide reaction: the enzyme is irreversibly inactivated.</text>
</comment>
<comment type="catalytic activity">
    <reaction evidence="1">
        <text>a 6-O-methyl-2'-deoxyguanosine in DNA + L-cysteinyl-[protein] = S-methyl-L-cysteinyl-[protein] + a 2'-deoxyguanosine in DNA</text>
        <dbReference type="Rhea" id="RHEA:24000"/>
        <dbReference type="Rhea" id="RHEA-COMP:10131"/>
        <dbReference type="Rhea" id="RHEA-COMP:10132"/>
        <dbReference type="Rhea" id="RHEA-COMP:11367"/>
        <dbReference type="Rhea" id="RHEA-COMP:11368"/>
        <dbReference type="ChEBI" id="CHEBI:29950"/>
        <dbReference type="ChEBI" id="CHEBI:82612"/>
        <dbReference type="ChEBI" id="CHEBI:85445"/>
        <dbReference type="ChEBI" id="CHEBI:85448"/>
        <dbReference type="EC" id="2.1.1.63"/>
    </reaction>
</comment>
<comment type="catalytic activity">
    <reaction evidence="1">
        <text>a 4-O-methyl-thymidine in DNA + L-cysteinyl-[protein] = a thymidine in DNA + S-methyl-L-cysteinyl-[protein]</text>
        <dbReference type="Rhea" id="RHEA:53428"/>
        <dbReference type="Rhea" id="RHEA-COMP:10131"/>
        <dbReference type="Rhea" id="RHEA-COMP:10132"/>
        <dbReference type="Rhea" id="RHEA-COMP:13555"/>
        <dbReference type="Rhea" id="RHEA-COMP:13556"/>
        <dbReference type="ChEBI" id="CHEBI:29950"/>
        <dbReference type="ChEBI" id="CHEBI:82612"/>
        <dbReference type="ChEBI" id="CHEBI:137386"/>
        <dbReference type="ChEBI" id="CHEBI:137387"/>
        <dbReference type="EC" id="2.1.1.63"/>
    </reaction>
</comment>
<comment type="subcellular location">
    <subcellularLocation>
        <location evidence="1">Cytoplasm</location>
    </subcellularLocation>
</comment>
<comment type="miscellaneous">
    <text>This enzyme catalyzes only one turnover and therefore is not strictly catalytic. According to one definition, an enzyme is a biocatalyst that acts repeatedly and over many reaction cycles.</text>
</comment>
<comment type="similarity">
    <text evidence="1">Belongs to the MGMT family.</text>
</comment>
<name>OGT_SACI6</name>
<dbReference type="EC" id="2.1.1.63" evidence="1"/>
<dbReference type="EMBL" id="CP001402">
    <property type="protein sequence ID" value="ACR40923.1"/>
    <property type="molecule type" value="Genomic_DNA"/>
</dbReference>
<dbReference type="RefSeq" id="WP_010923891.1">
    <property type="nucleotide sequence ID" value="NC_012726.1"/>
</dbReference>
<dbReference type="SMR" id="C4KKV8"/>
<dbReference type="KEGG" id="sid:M164_0289"/>
<dbReference type="HOGENOM" id="CLU_000445_52_2_2"/>
<dbReference type="Proteomes" id="UP000001479">
    <property type="component" value="Chromosome"/>
</dbReference>
<dbReference type="GO" id="GO:0005737">
    <property type="term" value="C:cytoplasm"/>
    <property type="evidence" value="ECO:0007669"/>
    <property type="project" value="UniProtKB-SubCell"/>
</dbReference>
<dbReference type="GO" id="GO:0003908">
    <property type="term" value="F:methylated-DNA-[protein]-cysteine S-methyltransferase activity"/>
    <property type="evidence" value="ECO:0007669"/>
    <property type="project" value="UniProtKB-UniRule"/>
</dbReference>
<dbReference type="GO" id="GO:0006307">
    <property type="term" value="P:DNA alkylation repair"/>
    <property type="evidence" value="ECO:0007669"/>
    <property type="project" value="UniProtKB-UniRule"/>
</dbReference>
<dbReference type="GO" id="GO:0032259">
    <property type="term" value="P:methylation"/>
    <property type="evidence" value="ECO:0007669"/>
    <property type="project" value="UniProtKB-KW"/>
</dbReference>
<dbReference type="CDD" id="cd06445">
    <property type="entry name" value="ATase"/>
    <property type="match status" value="1"/>
</dbReference>
<dbReference type="FunFam" id="1.10.10.10:FF:000214">
    <property type="entry name" value="Methylated-DNA--protein-cysteine methyltransferase"/>
    <property type="match status" value="1"/>
</dbReference>
<dbReference type="Gene3D" id="3.30.160.70">
    <property type="entry name" value="Methylated DNA-protein cysteine methyltransferase domain"/>
    <property type="match status" value="1"/>
</dbReference>
<dbReference type="Gene3D" id="1.10.10.10">
    <property type="entry name" value="Winged helix-like DNA-binding domain superfamily/Winged helix DNA-binding domain"/>
    <property type="match status" value="1"/>
</dbReference>
<dbReference type="HAMAP" id="MF_00772">
    <property type="entry name" value="OGT"/>
    <property type="match status" value="1"/>
</dbReference>
<dbReference type="InterPro" id="IPR001497">
    <property type="entry name" value="MethylDNA_cys_MeTrfase_AS"/>
</dbReference>
<dbReference type="InterPro" id="IPR014048">
    <property type="entry name" value="MethylDNA_cys_MeTrfase_DNA-bd"/>
</dbReference>
<dbReference type="InterPro" id="IPR036217">
    <property type="entry name" value="MethylDNA_cys_MeTrfase_DNAb"/>
</dbReference>
<dbReference type="InterPro" id="IPR008332">
    <property type="entry name" value="MethylG_MeTrfase_N"/>
</dbReference>
<dbReference type="InterPro" id="IPR023546">
    <property type="entry name" value="MGMT"/>
</dbReference>
<dbReference type="InterPro" id="IPR036631">
    <property type="entry name" value="MGMT_N_sf"/>
</dbReference>
<dbReference type="InterPro" id="IPR036388">
    <property type="entry name" value="WH-like_DNA-bd_sf"/>
</dbReference>
<dbReference type="NCBIfam" id="TIGR00589">
    <property type="entry name" value="ogt"/>
    <property type="match status" value="1"/>
</dbReference>
<dbReference type="PANTHER" id="PTHR10815">
    <property type="entry name" value="METHYLATED-DNA--PROTEIN-CYSTEINE METHYLTRANSFERASE"/>
    <property type="match status" value="1"/>
</dbReference>
<dbReference type="PANTHER" id="PTHR10815:SF13">
    <property type="entry name" value="METHYLATED-DNA--PROTEIN-CYSTEINE METHYLTRANSFERASE"/>
    <property type="match status" value="1"/>
</dbReference>
<dbReference type="Pfam" id="PF01035">
    <property type="entry name" value="DNA_binding_1"/>
    <property type="match status" value="1"/>
</dbReference>
<dbReference type="Pfam" id="PF02870">
    <property type="entry name" value="Methyltransf_1N"/>
    <property type="match status" value="1"/>
</dbReference>
<dbReference type="SUPFAM" id="SSF53155">
    <property type="entry name" value="Methylated DNA-protein cysteine methyltransferase domain"/>
    <property type="match status" value="1"/>
</dbReference>
<dbReference type="SUPFAM" id="SSF46767">
    <property type="entry name" value="Methylated DNA-protein cysteine methyltransferase, C-terminal domain"/>
    <property type="match status" value="1"/>
</dbReference>
<dbReference type="PROSITE" id="PS00374">
    <property type="entry name" value="MGMT"/>
    <property type="match status" value="1"/>
</dbReference>